<keyword id="KW-1003">Cell membrane</keyword>
<keyword id="KW-0472">Membrane</keyword>
<keyword id="KW-0677">Repeat</keyword>
<keyword id="KW-0812">Transmembrane</keyword>
<keyword id="KW-1133">Transmembrane helix</keyword>
<keyword id="KW-0813">Transport</keyword>
<dbReference type="EMBL" id="CP001113">
    <property type="protein sequence ID" value="ACF65266.1"/>
    <property type="molecule type" value="Genomic_DNA"/>
</dbReference>
<dbReference type="RefSeq" id="WP_001024853.1">
    <property type="nucleotide sequence ID" value="NZ_CCMR01000003.1"/>
</dbReference>
<dbReference type="SMR" id="B4T0D1"/>
<dbReference type="KEGG" id="see:SNSL254_A0943"/>
<dbReference type="HOGENOM" id="CLU_035023_2_2_6"/>
<dbReference type="Proteomes" id="UP000008824">
    <property type="component" value="Chromosome"/>
</dbReference>
<dbReference type="GO" id="GO:0005886">
    <property type="term" value="C:plasma membrane"/>
    <property type="evidence" value="ECO:0007669"/>
    <property type="project" value="UniProtKB-SubCell"/>
</dbReference>
<dbReference type="GO" id="GO:0008324">
    <property type="term" value="F:monoatomic cation transmembrane transporter activity"/>
    <property type="evidence" value="ECO:0007669"/>
    <property type="project" value="InterPro"/>
</dbReference>
<dbReference type="GO" id="GO:0006813">
    <property type="term" value="P:potassium ion transport"/>
    <property type="evidence" value="ECO:0007669"/>
    <property type="project" value="InterPro"/>
</dbReference>
<dbReference type="FunFam" id="3.30.70.1450:FF:000003">
    <property type="entry name" value="Putative transport protein YbjL"/>
    <property type="match status" value="1"/>
</dbReference>
<dbReference type="Gene3D" id="3.30.70.1450">
    <property type="entry name" value="Regulator of K+ conductance, C-terminal domain"/>
    <property type="match status" value="1"/>
</dbReference>
<dbReference type="HAMAP" id="MF_01015">
    <property type="entry name" value="YbjL"/>
    <property type="match status" value="1"/>
</dbReference>
<dbReference type="InterPro" id="IPR050144">
    <property type="entry name" value="AAE_transporter"/>
</dbReference>
<dbReference type="InterPro" id="IPR006037">
    <property type="entry name" value="RCK_C"/>
</dbReference>
<dbReference type="InterPro" id="IPR036721">
    <property type="entry name" value="RCK_C_sf"/>
</dbReference>
<dbReference type="InterPro" id="IPR023017">
    <property type="entry name" value="Transp_YbjL_put"/>
</dbReference>
<dbReference type="InterPro" id="IPR006512">
    <property type="entry name" value="YidE_YbjL"/>
</dbReference>
<dbReference type="NCBIfam" id="NF003440">
    <property type="entry name" value="PRK04972.1"/>
    <property type="match status" value="1"/>
</dbReference>
<dbReference type="NCBIfam" id="TIGR01625">
    <property type="entry name" value="YidE_YbjL_dupl"/>
    <property type="match status" value="2"/>
</dbReference>
<dbReference type="PANTHER" id="PTHR30445">
    <property type="entry name" value="K(+)_H(+) ANTIPORTER SUBUNIT KHTT"/>
    <property type="match status" value="1"/>
</dbReference>
<dbReference type="PANTHER" id="PTHR30445:SF10">
    <property type="entry name" value="TRANSPORT PROTEIN YBJL-RELATED"/>
    <property type="match status" value="1"/>
</dbReference>
<dbReference type="Pfam" id="PF06826">
    <property type="entry name" value="Asp-Al_Ex"/>
    <property type="match status" value="2"/>
</dbReference>
<dbReference type="Pfam" id="PF02080">
    <property type="entry name" value="TrkA_C"/>
    <property type="match status" value="2"/>
</dbReference>
<dbReference type="SUPFAM" id="SSF116726">
    <property type="entry name" value="TrkA C-terminal domain-like"/>
    <property type="match status" value="2"/>
</dbReference>
<dbReference type="PROSITE" id="PS51202">
    <property type="entry name" value="RCK_C"/>
    <property type="match status" value="2"/>
</dbReference>
<feature type="chain" id="PRO_1000135194" description="Putative transport protein YbjL">
    <location>
        <begin position="1"/>
        <end position="561"/>
    </location>
</feature>
<feature type="transmembrane region" description="Helical" evidence="1">
    <location>
        <begin position="8"/>
        <end position="28"/>
    </location>
</feature>
<feature type="transmembrane region" description="Helical" evidence="1">
    <location>
        <begin position="32"/>
        <end position="52"/>
    </location>
</feature>
<feature type="transmembrane region" description="Helical" evidence="1">
    <location>
        <begin position="66"/>
        <end position="86"/>
    </location>
</feature>
<feature type="transmembrane region" description="Helical" evidence="1">
    <location>
        <begin position="94"/>
        <end position="114"/>
    </location>
</feature>
<feature type="transmembrane region" description="Helical" evidence="1">
    <location>
        <begin position="158"/>
        <end position="178"/>
    </location>
</feature>
<feature type="transmembrane region" description="Helical" evidence="1">
    <location>
        <begin position="383"/>
        <end position="403"/>
    </location>
</feature>
<feature type="transmembrane region" description="Helical" evidence="1">
    <location>
        <begin position="406"/>
        <end position="426"/>
    </location>
</feature>
<feature type="transmembrane region" description="Helical" evidence="1">
    <location>
        <begin position="447"/>
        <end position="467"/>
    </location>
</feature>
<feature type="transmembrane region" description="Helical" evidence="1">
    <location>
        <begin position="475"/>
        <end position="495"/>
    </location>
</feature>
<feature type="transmembrane region" description="Helical" evidence="1">
    <location>
        <begin position="540"/>
        <end position="560"/>
    </location>
</feature>
<feature type="domain" description="RCK C-terminal 1" evidence="1">
    <location>
        <begin position="200"/>
        <end position="288"/>
    </location>
</feature>
<feature type="domain" description="RCK C-terminal 2" evidence="1">
    <location>
        <begin position="292"/>
        <end position="373"/>
    </location>
</feature>
<protein>
    <recommendedName>
        <fullName evidence="1">Putative transport protein YbjL</fullName>
    </recommendedName>
</protein>
<sequence>MNINVADLLNGNYILLLFVVLALGLCLGKLRLGSVQLGNSIGVLVVSLLLGQQHFSINTDALNLGFMLFIFCVGVEAGPNFFSIFFRDGKNYLMLALVMVGSALLIALGLGKLFGWDIGLTAGMLAGSMTSTPVLVGAGDTLRHSGIASTQLSSALDNLSLGYALTYLIGLVSLIVGARYLPKLQHQDLQTSAQQIARERGLDTDANRKVYLPVIRAYRVGPELVAWTDGKNLRELGIYRQTGCYIERIRRNGILANPDGDAVLQMGDEIALVGYPDAHARLDPSFRNGKEVFDRDLLDMRIVTEEIVVKNHNAVGRRLAQLKLTDHGCFLNRVIRSQIEMPIDDNVVLNKGDVLQVSGDARRVKTIADRIGFISIHSQVTDLLAFCAFFIIGLMIGMITFQFSNFSFGIGNAAGLLFAGIMLGFLRANHPTFGYIPQGALNMVKEFGLMVFMAGVGLSAGSGISNGLGAVGGQMLIAGLVVSLVPVVICFLFGAYVLRMNRALLFGAMMGARTCAPAMEIISDTARSNIPALGYAGTYAIANVLLTLAGTLIVIIWPGLG</sequence>
<evidence type="ECO:0000255" key="1">
    <source>
        <dbReference type="HAMAP-Rule" id="MF_01015"/>
    </source>
</evidence>
<name>YBJL_SALNS</name>
<comment type="subcellular location">
    <subcellularLocation>
        <location evidence="1">Cell membrane</location>
        <topology evidence="1">Multi-pass membrane protein</topology>
    </subcellularLocation>
</comment>
<comment type="similarity">
    <text evidence="1">Belongs to the AAE transporter (TC 2.A.81) family. YbjL subfamily.</text>
</comment>
<proteinExistence type="inferred from homology"/>
<reference key="1">
    <citation type="journal article" date="2011" name="J. Bacteriol.">
        <title>Comparative genomics of 28 Salmonella enterica isolates: evidence for CRISPR-mediated adaptive sublineage evolution.</title>
        <authorList>
            <person name="Fricke W.F."/>
            <person name="Mammel M.K."/>
            <person name="McDermott P.F."/>
            <person name="Tartera C."/>
            <person name="White D.G."/>
            <person name="Leclerc J.E."/>
            <person name="Ravel J."/>
            <person name="Cebula T.A."/>
        </authorList>
    </citation>
    <scope>NUCLEOTIDE SEQUENCE [LARGE SCALE GENOMIC DNA]</scope>
    <source>
        <strain>SL254</strain>
    </source>
</reference>
<gene>
    <name evidence="1" type="primary">ybjL</name>
    <name type="ordered locus">SNSL254_A0943</name>
</gene>
<organism>
    <name type="scientific">Salmonella newport (strain SL254)</name>
    <dbReference type="NCBI Taxonomy" id="423368"/>
    <lineage>
        <taxon>Bacteria</taxon>
        <taxon>Pseudomonadati</taxon>
        <taxon>Pseudomonadota</taxon>
        <taxon>Gammaproteobacteria</taxon>
        <taxon>Enterobacterales</taxon>
        <taxon>Enterobacteriaceae</taxon>
        <taxon>Salmonella</taxon>
    </lineage>
</organism>
<accession>B4T0D1</accession>